<comment type="function">
    <text evidence="1">DNA ligase that catalyzes the formation of phosphodiester linkages between 5'-phosphoryl and 3'-hydroxyl groups in double-stranded DNA using NAD as a coenzyme and as the energy source for the reaction. It is essential for DNA replication and repair of damaged DNA.</text>
</comment>
<comment type="catalytic activity">
    <reaction evidence="1">
        <text>NAD(+) + (deoxyribonucleotide)n-3'-hydroxyl + 5'-phospho-(deoxyribonucleotide)m = (deoxyribonucleotide)n+m + AMP + beta-nicotinamide D-nucleotide.</text>
        <dbReference type="EC" id="6.5.1.2"/>
    </reaction>
</comment>
<comment type="cofactor">
    <cofactor evidence="1">
        <name>Mg(2+)</name>
        <dbReference type="ChEBI" id="CHEBI:18420"/>
    </cofactor>
    <cofactor evidence="1">
        <name>Mn(2+)</name>
        <dbReference type="ChEBI" id="CHEBI:29035"/>
    </cofactor>
</comment>
<comment type="similarity">
    <text evidence="1">Belongs to the NAD-dependent DNA ligase family. LigA subfamily.</text>
</comment>
<evidence type="ECO:0000255" key="1">
    <source>
        <dbReference type="HAMAP-Rule" id="MF_01588"/>
    </source>
</evidence>
<keyword id="KW-0227">DNA damage</keyword>
<keyword id="KW-0234">DNA repair</keyword>
<keyword id="KW-0235">DNA replication</keyword>
<keyword id="KW-0436">Ligase</keyword>
<keyword id="KW-0460">Magnesium</keyword>
<keyword id="KW-0464">Manganese</keyword>
<keyword id="KW-0479">Metal-binding</keyword>
<keyword id="KW-0520">NAD</keyword>
<keyword id="KW-1185">Reference proteome</keyword>
<keyword id="KW-0862">Zinc</keyword>
<reference key="1">
    <citation type="submission" date="2008-06" db="EMBL/GenBank/DDBJ databases">
        <title>Complete sequence of Chloroherpeton thalassium ATCC 35110.</title>
        <authorList>
            <consortium name="US DOE Joint Genome Institute"/>
            <person name="Lucas S."/>
            <person name="Copeland A."/>
            <person name="Lapidus A."/>
            <person name="Glavina del Rio T."/>
            <person name="Dalin E."/>
            <person name="Tice H."/>
            <person name="Bruce D."/>
            <person name="Goodwin L."/>
            <person name="Pitluck S."/>
            <person name="Schmutz J."/>
            <person name="Larimer F."/>
            <person name="Land M."/>
            <person name="Hauser L."/>
            <person name="Kyrpides N."/>
            <person name="Mikhailova N."/>
            <person name="Liu Z."/>
            <person name="Li T."/>
            <person name="Zhao F."/>
            <person name="Overmann J."/>
            <person name="Bryant D.A."/>
            <person name="Richardson P."/>
        </authorList>
    </citation>
    <scope>NUCLEOTIDE SEQUENCE [LARGE SCALE GENOMIC DNA]</scope>
    <source>
        <strain>ATCC 35110 / GB-78</strain>
    </source>
</reference>
<dbReference type="EC" id="6.5.1.2" evidence="1"/>
<dbReference type="EMBL" id="CP001100">
    <property type="protein sequence ID" value="ACF12561.1"/>
    <property type="molecule type" value="Genomic_DNA"/>
</dbReference>
<dbReference type="RefSeq" id="WP_012498645.1">
    <property type="nucleotide sequence ID" value="NC_011026.1"/>
</dbReference>
<dbReference type="SMR" id="B3QSH0"/>
<dbReference type="STRING" id="517418.Ctha_0090"/>
<dbReference type="KEGG" id="cts:Ctha_0090"/>
<dbReference type="eggNOG" id="COG0272">
    <property type="taxonomic scope" value="Bacteria"/>
</dbReference>
<dbReference type="HOGENOM" id="CLU_007764_2_1_10"/>
<dbReference type="OrthoDB" id="9759736at2"/>
<dbReference type="Proteomes" id="UP000001208">
    <property type="component" value="Chromosome"/>
</dbReference>
<dbReference type="GO" id="GO:0005829">
    <property type="term" value="C:cytosol"/>
    <property type="evidence" value="ECO:0007669"/>
    <property type="project" value="TreeGrafter"/>
</dbReference>
<dbReference type="GO" id="GO:0003677">
    <property type="term" value="F:DNA binding"/>
    <property type="evidence" value="ECO:0007669"/>
    <property type="project" value="InterPro"/>
</dbReference>
<dbReference type="GO" id="GO:0003911">
    <property type="term" value="F:DNA ligase (NAD+) activity"/>
    <property type="evidence" value="ECO:0007669"/>
    <property type="project" value="UniProtKB-UniRule"/>
</dbReference>
<dbReference type="GO" id="GO:0046872">
    <property type="term" value="F:metal ion binding"/>
    <property type="evidence" value="ECO:0007669"/>
    <property type="project" value="UniProtKB-KW"/>
</dbReference>
<dbReference type="GO" id="GO:0006281">
    <property type="term" value="P:DNA repair"/>
    <property type="evidence" value="ECO:0007669"/>
    <property type="project" value="UniProtKB-KW"/>
</dbReference>
<dbReference type="GO" id="GO:0006260">
    <property type="term" value="P:DNA replication"/>
    <property type="evidence" value="ECO:0007669"/>
    <property type="project" value="UniProtKB-KW"/>
</dbReference>
<dbReference type="CDD" id="cd17748">
    <property type="entry name" value="BRCT_DNA_ligase_like"/>
    <property type="match status" value="1"/>
</dbReference>
<dbReference type="CDD" id="cd00114">
    <property type="entry name" value="LIGANc"/>
    <property type="match status" value="1"/>
</dbReference>
<dbReference type="FunFam" id="1.10.150.20:FF:000006">
    <property type="entry name" value="DNA ligase"/>
    <property type="match status" value="1"/>
</dbReference>
<dbReference type="FunFam" id="1.10.150.20:FF:000007">
    <property type="entry name" value="DNA ligase"/>
    <property type="match status" value="1"/>
</dbReference>
<dbReference type="FunFam" id="1.10.287.610:FF:000002">
    <property type="entry name" value="DNA ligase"/>
    <property type="match status" value="1"/>
</dbReference>
<dbReference type="FunFam" id="2.40.50.140:FF:000012">
    <property type="entry name" value="DNA ligase"/>
    <property type="match status" value="1"/>
</dbReference>
<dbReference type="Gene3D" id="6.20.10.30">
    <property type="match status" value="1"/>
</dbReference>
<dbReference type="Gene3D" id="1.10.150.20">
    <property type="entry name" value="5' to 3' exonuclease, C-terminal subdomain"/>
    <property type="match status" value="2"/>
</dbReference>
<dbReference type="Gene3D" id="3.40.50.10190">
    <property type="entry name" value="BRCT domain"/>
    <property type="match status" value="1"/>
</dbReference>
<dbReference type="Gene3D" id="3.30.470.30">
    <property type="entry name" value="DNA ligase/mRNA capping enzyme"/>
    <property type="match status" value="1"/>
</dbReference>
<dbReference type="Gene3D" id="1.10.287.610">
    <property type="entry name" value="Helix hairpin bin"/>
    <property type="match status" value="1"/>
</dbReference>
<dbReference type="Gene3D" id="2.40.50.140">
    <property type="entry name" value="Nucleic acid-binding proteins"/>
    <property type="match status" value="1"/>
</dbReference>
<dbReference type="HAMAP" id="MF_01588">
    <property type="entry name" value="DNA_ligase_A"/>
    <property type="match status" value="1"/>
</dbReference>
<dbReference type="InterPro" id="IPR001357">
    <property type="entry name" value="BRCT_dom"/>
</dbReference>
<dbReference type="InterPro" id="IPR036420">
    <property type="entry name" value="BRCT_dom_sf"/>
</dbReference>
<dbReference type="InterPro" id="IPR041663">
    <property type="entry name" value="DisA/LigA_HHH"/>
</dbReference>
<dbReference type="InterPro" id="IPR001679">
    <property type="entry name" value="DNA_ligase"/>
</dbReference>
<dbReference type="InterPro" id="IPR033136">
    <property type="entry name" value="DNA_ligase_CS"/>
</dbReference>
<dbReference type="InterPro" id="IPR013839">
    <property type="entry name" value="DNAligase_adenylation"/>
</dbReference>
<dbReference type="InterPro" id="IPR013840">
    <property type="entry name" value="DNAligase_N"/>
</dbReference>
<dbReference type="InterPro" id="IPR003583">
    <property type="entry name" value="Hlx-hairpin-Hlx_DNA-bd_motif"/>
</dbReference>
<dbReference type="InterPro" id="IPR012340">
    <property type="entry name" value="NA-bd_OB-fold"/>
</dbReference>
<dbReference type="InterPro" id="IPR004150">
    <property type="entry name" value="NAD_DNA_ligase_OB"/>
</dbReference>
<dbReference type="InterPro" id="IPR010994">
    <property type="entry name" value="RuvA_2-like"/>
</dbReference>
<dbReference type="InterPro" id="IPR004149">
    <property type="entry name" value="Znf_DNAligase_C4"/>
</dbReference>
<dbReference type="NCBIfam" id="TIGR00575">
    <property type="entry name" value="dnlj"/>
    <property type="match status" value="1"/>
</dbReference>
<dbReference type="NCBIfam" id="NF005932">
    <property type="entry name" value="PRK07956.1"/>
    <property type="match status" value="1"/>
</dbReference>
<dbReference type="PANTHER" id="PTHR23389">
    <property type="entry name" value="CHROMOSOME TRANSMISSION FIDELITY FACTOR 18"/>
    <property type="match status" value="1"/>
</dbReference>
<dbReference type="PANTHER" id="PTHR23389:SF9">
    <property type="entry name" value="DNA LIGASE"/>
    <property type="match status" value="1"/>
</dbReference>
<dbReference type="Pfam" id="PF00533">
    <property type="entry name" value="BRCT"/>
    <property type="match status" value="1"/>
</dbReference>
<dbReference type="Pfam" id="PF01653">
    <property type="entry name" value="DNA_ligase_aden"/>
    <property type="match status" value="1"/>
</dbReference>
<dbReference type="Pfam" id="PF03120">
    <property type="entry name" value="DNA_ligase_OB"/>
    <property type="match status" value="1"/>
</dbReference>
<dbReference type="Pfam" id="PF03119">
    <property type="entry name" value="DNA_ligase_ZBD"/>
    <property type="match status" value="1"/>
</dbReference>
<dbReference type="Pfam" id="PF12826">
    <property type="entry name" value="HHH_2"/>
    <property type="match status" value="1"/>
</dbReference>
<dbReference type="Pfam" id="PF14520">
    <property type="entry name" value="HHH_5"/>
    <property type="match status" value="1"/>
</dbReference>
<dbReference type="Pfam" id="PF22745">
    <property type="entry name" value="Nlig-Ia"/>
    <property type="match status" value="1"/>
</dbReference>
<dbReference type="PIRSF" id="PIRSF001604">
    <property type="entry name" value="LigA"/>
    <property type="match status" value="1"/>
</dbReference>
<dbReference type="SMART" id="SM00292">
    <property type="entry name" value="BRCT"/>
    <property type="match status" value="1"/>
</dbReference>
<dbReference type="SMART" id="SM00278">
    <property type="entry name" value="HhH1"/>
    <property type="match status" value="3"/>
</dbReference>
<dbReference type="SMART" id="SM00532">
    <property type="entry name" value="LIGANc"/>
    <property type="match status" value="1"/>
</dbReference>
<dbReference type="SUPFAM" id="SSF52113">
    <property type="entry name" value="BRCT domain"/>
    <property type="match status" value="1"/>
</dbReference>
<dbReference type="SUPFAM" id="SSF56091">
    <property type="entry name" value="DNA ligase/mRNA capping enzyme, catalytic domain"/>
    <property type="match status" value="1"/>
</dbReference>
<dbReference type="SUPFAM" id="SSF50249">
    <property type="entry name" value="Nucleic acid-binding proteins"/>
    <property type="match status" value="1"/>
</dbReference>
<dbReference type="SUPFAM" id="SSF47781">
    <property type="entry name" value="RuvA domain 2-like"/>
    <property type="match status" value="1"/>
</dbReference>
<dbReference type="PROSITE" id="PS50172">
    <property type="entry name" value="BRCT"/>
    <property type="match status" value="1"/>
</dbReference>
<dbReference type="PROSITE" id="PS01056">
    <property type="entry name" value="DNA_LIGASE_N2"/>
    <property type="match status" value="1"/>
</dbReference>
<proteinExistence type="inferred from homology"/>
<name>DNLJ_CHLT3</name>
<organism>
    <name type="scientific">Chloroherpeton thalassium (strain ATCC 35110 / GB-78)</name>
    <dbReference type="NCBI Taxonomy" id="517418"/>
    <lineage>
        <taxon>Bacteria</taxon>
        <taxon>Pseudomonadati</taxon>
        <taxon>Chlorobiota</taxon>
        <taxon>Chlorobiia</taxon>
        <taxon>Chlorobiales</taxon>
        <taxon>Chloroherpetonaceae</taxon>
        <taxon>Chloroherpeton</taxon>
    </lineage>
</organism>
<gene>
    <name evidence="1" type="primary">ligA</name>
    <name type="ordered locus">Ctha_0090</name>
</gene>
<protein>
    <recommendedName>
        <fullName evidence="1">DNA ligase</fullName>
        <ecNumber evidence="1">6.5.1.2</ecNumber>
    </recommendedName>
    <alternativeName>
        <fullName evidence="1">Polydeoxyribonucleotide synthase [NAD(+)]</fullName>
    </alternativeName>
</protein>
<sequence>MNKSEAEAKIRALRREINEHNYNYYNLAKPKISDYDFDALLRTLAELEAKYPDLVTPDSPSQRVGGEVTKNFPIVRHKTRMLSLSNTYNLGELGDFLARVAKSLESEGVQAYDFTAELKYDGVAVSLIYRDGLLVQGATRGDGSQGDEITANLKTVRTIPLRLRAPASGSAFDTEKWNGSGDIEVRGEVFMTKADFEKINAERDESEQFANPRNATAGTLKQQDSREVAKRRLTMVAYYLDGRPFADLSHGERLEKLAELGFYTGEAHRTCRSLQDIQAFLDEWENKRDALAYEIDGAVIKLNNVRYQELLGATSKSPRWAIAYKYAARRAETVLENVVFQVGRTGAITPVAELQPVKLSGSVISRSTLHNLDEIRRLDLHIGDRVIIEKSGDVIPKVVGVVAEKRPPEARTIEPLSTCPSCGTPLEHPENEVIYYCPNEFGCPAQRKARLVHFASRHAMDIEGLGEAVVEQLLGAGLIGDPGDLYFIEKTALLALERFAEKSAQNLLNGIEASKSRSFERLIFALGIRYVGRRTASILADRFTSLDTIKSASQAELCETEEIGETIAKSVALFFTKPQVQELLGKLERAGLRLASDKKSPDAPQTFAGMTVVFTGSLENFTRDDAAAKVGERGGKVTSTVSKKTSLVVAGKEAGGKLAKAEKLGVKIVTEAEFQTMLAAESGD</sequence>
<accession>B3QSH0</accession>
<feature type="chain" id="PRO_0000380337" description="DNA ligase">
    <location>
        <begin position="1"/>
        <end position="684"/>
    </location>
</feature>
<feature type="domain" description="BRCT" evidence="1">
    <location>
        <begin position="602"/>
        <end position="684"/>
    </location>
</feature>
<feature type="active site" description="N6-AMP-lysine intermediate" evidence="1">
    <location>
        <position position="119"/>
    </location>
</feature>
<feature type="binding site" evidence="1">
    <location>
        <begin position="34"/>
        <end position="38"/>
    </location>
    <ligand>
        <name>NAD(+)</name>
        <dbReference type="ChEBI" id="CHEBI:57540"/>
    </ligand>
</feature>
<feature type="binding site" evidence="1">
    <location>
        <begin position="83"/>
        <end position="84"/>
    </location>
    <ligand>
        <name>NAD(+)</name>
        <dbReference type="ChEBI" id="CHEBI:57540"/>
    </ligand>
</feature>
<feature type="binding site" evidence="1">
    <location>
        <position position="117"/>
    </location>
    <ligand>
        <name>NAD(+)</name>
        <dbReference type="ChEBI" id="CHEBI:57540"/>
    </ligand>
</feature>
<feature type="binding site" evidence="1">
    <location>
        <position position="140"/>
    </location>
    <ligand>
        <name>NAD(+)</name>
        <dbReference type="ChEBI" id="CHEBI:57540"/>
    </ligand>
</feature>
<feature type="binding site" evidence="1">
    <location>
        <position position="188"/>
    </location>
    <ligand>
        <name>NAD(+)</name>
        <dbReference type="ChEBI" id="CHEBI:57540"/>
    </ligand>
</feature>
<feature type="binding site" evidence="1">
    <location>
        <position position="301"/>
    </location>
    <ligand>
        <name>NAD(+)</name>
        <dbReference type="ChEBI" id="CHEBI:57540"/>
    </ligand>
</feature>
<feature type="binding site" evidence="1">
    <location>
        <position position="325"/>
    </location>
    <ligand>
        <name>NAD(+)</name>
        <dbReference type="ChEBI" id="CHEBI:57540"/>
    </ligand>
</feature>
<feature type="binding site" evidence="1">
    <location>
        <position position="419"/>
    </location>
    <ligand>
        <name>Zn(2+)</name>
        <dbReference type="ChEBI" id="CHEBI:29105"/>
    </ligand>
</feature>
<feature type="binding site" evidence="1">
    <location>
        <position position="422"/>
    </location>
    <ligand>
        <name>Zn(2+)</name>
        <dbReference type="ChEBI" id="CHEBI:29105"/>
    </ligand>
</feature>
<feature type="binding site" evidence="1">
    <location>
        <position position="437"/>
    </location>
    <ligand>
        <name>Zn(2+)</name>
        <dbReference type="ChEBI" id="CHEBI:29105"/>
    </ligand>
</feature>
<feature type="binding site" evidence="1">
    <location>
        <position position="443"/>
    </location>
    <ligand>
        <name>Zn(2+)</name>
        <dbReference type="ChEBI" id="CHEBI:29105"/>
    </ligand>
</feature>